<comment type="function">
    <text evidence="1">Removes the 2'-phosphate from RNA via an intermediate in which the phosphate is ADP-ribosylated by NAD followed by a presumed transesterification to release the RNA and generate ADP-ribose 1''-2''-cyclic phosphate (APPR&gt;P). May function as an ADP-ribosylase.</text>
</comment>
<comment type="similarity">
    <text evidence="1">Belongs to the KptA/TPT1 family.</text>
</comment>
<name>KPTA_ECO8A</name>
<dbReference type="EC" id="2.7.1.-" evidence="1"/>
<dbReference type="EMBL" id="CU928160">
    <property type="protein sequence ID" value="CAR01289.1"/>
    <property type="molecule type" value="Genomic_DNA"/>
</dbReference>
<dbReference type="RefSeq" id="WP_001151848.1">
    <property type="nucleotide sequence ID" value="NC_011741.1"/>
</dbReference>
<dbReference type="SMR" id="B7LXP0"/>
<dbReference type="KEGG" id="ecr:ECIAI1_4548"/>
<dbReference type="HOGENOM" id="CLU_052998_4_0_6"/>
<dbReference type="GO" id="GO:0003950">
    <property type="term" value="F:NAD+ poly-ADP-ribosyltransferase activity"/>
    <property type="evidence" value="ECO:0007669"/>
    <property type="project" value="InterPro"/>
</dbReference>
<dbReference type="GO" id="GO:0000215">
    <property type="term" value="F:tRNA 2'-phosphotransferase activity"/>
    <property type="evidence" value="ECO:0007669"/>
    <property type="project" value="TreeGrafter"/>
</dbReference>
<dbReference type="GO" id="GO:0006388">
    <property type="term" value="P:tRNA splicing, via endonucleolytic cleavage and ligation"/>
    <property type="evidence" value="ECO:0007669"/>
    <property type="project" value="UniProtKB-UniRule"/>
</dbReference>
<dbReference type="FunFam" id="1.10.10.970:FF:000001">
    <property type="entry name" value="RNA 2'-phosphotransferase"/>
    <property type="match status" value="1"/>
</dbReference>
<dbReference type="FunFam" id="3.20.170.30:FF:000001">
    <property type="entry name" value="RNA 2'-phosphotransferase"/>
    <property type="match status" value="1"/>
</dbReference>
<dbReference type="Gene3D" id="3.20.170.30">
    <property type="match status" value="1"/>
</dbReference>
<dbReference type="Gene3D" id="1.10.10.970">
    <property type="entry name" value="RNA 2'-phosphotransferase, Tpt1/KptA family, N-terminal domain"/>
    <property type="match status" value="1"/>
</dbReference>
<dbReference type="HAMAP" id="MF_00299">
    <property type="entry name" value="KptA"/>
    <property type="match status" value="1"/>
</dbReference>
<dbReference type="InterPro" id="IPR002745">
    <property type="entry name" value="Ptrans_KptA/Tpt1"/>
</dbReference>
<dbReference type="InterPro" id="IPR042081">
    <property type="entry name" value="RNA_2'-PTrans_C"/>
</dbReference>
<dbReference type="InterPro" id="IPR022928">
    <property type="entry name" value="RNA_2'-PTrans_KptA"/>
</dbReference>
<dbReference type="InterPro" id="IPR042080">
    <property type="entry name" value="RNA_2'-PTrans_N"/>
</dbReference>
<dbReference type="NCBIfam" id="NF002012">
    <property type="entry name" value="PRK00819.1-1"/>
    <property type="match status" value="1"/>
</dbReference>
<dbReference type="NCBIfam" id="NF002014">
    <property type="entry name" value="PRK00819.1-4"/>
    <property type="match status" value="1"/>
</dbReference>
<dbReference type="PANTHER" id="PTHR12684">
    <property type="entry name" value="PUTATIVE PHOSPHOTRANSFERASE"/>
    <property type="match status" value="1"/>
</dbReference>
<dbReference type="PANTHER" id="PTHR12684:SF2">
    <property type="entry name" value="TRNA 2'-PHOSPHOTRANSFERASE 1"/>
    <property type="match status" value="1"/>
</dbReference>
<dbReference type="Pfam" id="PF01885">
    <property type="entry name" value="PTS_2-RNA"/>
    <property type="match status" value="1"/>
</dbReference>
<dbReference type="SUPFAM" id="SSF56399">
    <property type="entry name" value="ADP-ribosylation"/>
    <property type="match status" value="1"/>
</dbReference>
<reference key="1">
    <citation type="journal article" date="2009" name="PLoS Genet.">
        <title>Organised genome dynamics in the Escherichia coli species results in highly diverse adaptive paths.</title>
        <authorList>
            <person name="Touchon M."/>
            <person name="Hoede C."/>
            <person name="Tenaillon O."/>
            <person name="Barbe V."/>
            <person name="Baeriswyl S."/>
            <person name="Bidet P."/>
            <person name="Bingen E."/>
            <person name="Bonacorsi S."/>
            <person name="Bouchier C."/>
            <person name="Bouvet O."/>
            <person name="Calteau A."/>
            <person name="Chiapello H."/>
            <person name="Clermont O."/>
            <person name="Cruveiller S."/>
            <person name="Danchin A."/>
            <person name="Diard M."/>
            <person name="Dossat C."/>
            <person name="Karoui M.E."/>
            <person name="Frapy E."/>
            <person name="Garry L."/>
            <person name="Ghigo J.M."/>
            <person name="Gilles A.M."/>
            <person name="Johnson J."/>
            <person name="Le Bouguenec C."/>
            <person name="Lescat M."/>
            <person name="Mangenot S."/>
            <person name="Martinez-Jehanne V."/>
            <person name="Matic I."/>
            <person name="Nassif X."/>
            <person name="Oztas S."/>
            <person name="Petit M.A."/>
            <person name="Pichon C."/>
            <person name="Rouy Z."/>
            <person name="Ruf C.S."/>
            <person name="Schneider D."/>
            <person name="Tourret J."/>
            <person name="Vacherie B."/>
            <person name="Vallenet D."/>
            <person name="Medigue C."/>
            <person name="Rocha E.P.C."/>
            <person name="Denamur E."/>
        </authorList>
    </citation>
    <scope>NUCLEOTIDE SEQUENCE [LARGE SCALE GENOMIC DNA]</scope>
    <source>
        <strain>IAI1</strain>
    </source>
</reference>
<feature type="chain" id="PRO_1000119479" description="Probable RNA 2'-phosphotransferase">
    <location>
        <begin position="1"/>
        <end position="184"/>
    </location>
</feature>
<gene>
    <name evidence="1" type="primary">kptA</name>
    <name type="ordered locus">ECIAI1_4548</name>
</gene>
<proteinExistence type="inferred from homology"/>
<evidence type="ECO:0000255" key="1">
    <source>
        <dbReference type="HAMAP-Rule" id="MF_00299"/>
    </source>
</evidence>
<sequence length="184" mass="20504">MAKYNEKELADTSKFLSFVLRHKPEAIGIVLDREGWADIDKLILCAQKAGKRLTRALLDTVVATSDKKRFSHSSDGRCIRAVQGHSTSQVAISFAEKTPPQFLYHGTASRFLDEIKKQGLIAGERHYVHLSADEATARKVGARHGSPVILTVKAQEMAKRGIPFWQAENGVWLTSTVAVEFLEW</sequence>
<organism>
    <name type="scientific">Escherichia coli O8 (strain IAI1)</name>
    <dbReference type="NCBI Taxonomy" id="585034"/>
    <lineage>
        <taxon>Bacteria</taxon>
        <taxon>Pseudomonadati</taxon>
        <taxon>Pseudomonadota</taxon>
        <taxon>Gammaproteobacteria</taxon>
        <taxon>Enterobacterales</taxon>
        <taxon>Enterobacteriaceae</taxon>
        <taxon>Escherichia</taxon>
    </lineage>
</organism>
<protein>
    <recommendedName>
        <fullName evidence="1">Probable RNA 2'-phosphotransferase</fullName>
        <ecNumber evidence="1">2.7.1.-</ecNumber>
    </recommendedName>
</protein>
<accession>B7LXP0</accession>
<keyword id="KW-0520">NAD</keyword>
<keyword id="KW-0808">Transferase</keyword>